<gene>
    <name type="primary">Chrng</name>
    <name type="synonym">Achrg</name>
</gene>
<dbReference type="EMBL" id="X74834">
    <property type="protein sequence ID" value="CAA52828.1"/>
    <property type="molecule type" value="mRNA"/>
</dbReference>
<dbReference type="EMBL" id="X06364">
    <property type="protein sequence ID" value="CAA29662.1"/>
    <property type="molecule type" value="Genomic_DNA"/>
</dbReference>
<dbReference type="PIR" id="S13874">
    <property type="entry name" value="S13874"/>
</dbReference>
<dbReference type="RefSeq" id="NP_062018.1">
    <property type="nucleotide sequence ID" value="NM_019145.1"/>
</dbReference>
<dbReference type="SMR" id="P18916"/>
<dbReference type="ComplexPortal" id="CPX-253">
    <property type="entry name" value="Muscle-type nicotinic acetylcholine receptor complex, alpha1-beta1-delta-gamma"/>
</dbReference>
<dbReference type="FunCoup" id="P18916">
    <property type="interactions" value="22"/>
</dbReference>
<dbReference type="BindingDB" id="P18916"/>
<dbReference type="ChEMBL" id="CHEMBL4523658"/>
<dbReference type="GlyCosmos" id="P18916">
    <property type="glycosylation" value="2 sites, No reported glycans"/>
</dbReference>
<dbReference type="GlyGen" id="P18916">
    <property type="glycosylation" value="3 sites"/>
</dbReference>
<dbReference type="PhosphoSitePlus" id="P18916"/>
<dbReference type="PaxDb" id="10116-ENSRNOP00000026529"/>
<dbReference type="GeneID" id="25753"/>
<dbReference type="KEGG" id="rno:25753"/>
<dbReference type="UCSC" id="RGD:2354">
    <property type="organism name" value="rat"/>
</dbReference>
<dbReference type="AGR" id="RGD:2354"/>
<dbReference type="CTD" id="1146"/>
<dbReference type="RGD" id="2354">
    <property type="gene designation" value="Chrng"/>
</dbReference>
<dbReference type="eggNOG" id="KOG3645">
    <property type="taxonomic scope" value="Eukaryota"/>
</dbReference>
<dbReference type="InParanoid" id="P18916"/>
<dbReference type="OrthoDB" id="46729at9989"/>
<dbReference type="PhylomeDB" id="P18916"/>
<dbReference type="Reactome" id="R-RNO-629587">
    <property type="pathway name" value="Highly sodium permeable postsynaptic acetylcholine nicotinic receptors"/>
</dbReference>
<dbReference type="PRO" id="PR:P18916"/>
<dbReference type="Proteomes" id="UP000002494">
    <property type="component" value="Unplaced"/>
</dbReference>
<dbReference type="GO" id="GO:0005892">
    <property type="term" value="C:acetylcholine-gated channel complex"/>
    <property type="evidence" value="ECO:0000314"/>
    <property type="project" value="RGD"/>
</dbReference>
<dbReference type="GO" id="GO:0043005">
    <property type="term" value="C:neuron projection"/>
    <property type="evidence" value="ECO:0000318"/>
    <property type="project" value="GO_Central"/>
</dbReference>
<dbReference type="GO" id="GO:0005886">
    <property type="term" value="C:plasma membrane"/>
    <property type="evidence" value="ECO:0000266"/>
    <property type="project" value="RGD"/>
</dbReference>
<dbReference type="GO" id="GO:0045211">
    <property type="term" value="C:postsynaptic membrane"/>
    <property type="evidence" value="ECO:0000266"/>
    <property type="project" value="RGD"/>
</dbReference>
<dbReference type="GO" id="GO:0045202">
    <property type="term" value="C:synapse"/>
    <property type="evidence" value="ECO:0000318"/>
    <property type="project" value="GO_Central"/>
</dbReference>
<dbReference type="GO" id="GO:0015464">
    <property type="term" value="F:acetylcholine receptor activity"/>
    <property type="evidence" value="ECO:0000318"/>
    <property type="project" value="GO_Central"/>
</dbReference>
<dbReference type="GO" id="GO:0022848">
    <property type="term" value="F:acetylcholine-gated monoatomic cation-selective channel activity"/>
    <property type="evidence" value="ECO:0000314"/>
    <property type="project" value="RGD"/>
</dbReference>
<dbReference type="GO" id="GO:0015276">
    <property type="term" value="F:ligand-gated monoatomic ion channel activity"/>
    <property type="evidence" value="ECO:0000314"/>
    <property type="project" value="RGD"/>
</dbReference>
<dbReference type="GO" id="GO:0095500">
    <property type="term" value="P:acetylcholine receptor signaling pathway"/>
    <property type="evidence" value="ECO:0000318"/>
    <property type="project" value="GO_Central"/>
</dbReference>
<dbReference type="GO" id="GO:0007268">
    <property type="term" value="P:chemical synaptic transmission"/>
    <property type="evidence" value="ECO:0000318"/>
    <property type="project" value="GO_Central"/>
</dbReference>
<dbReference type="GO" id="GO:0051899">
    <property type="term" value="P:membrane depolarization"/>
    <property type="evidence" value="ECO:0000318"/>
    <property type="project" value="GO_Central"/>
</dbReference>
<dbReference type="GO" id="GO:0006812">
    <property type="term" value="P:monoatomic cation transport"/>
    <property type="evidence" value="ECO:0000314"/>
    <property type="project" value="RGD"/>
</dbReference>
<dbReference type="GO" id="GO:0034220">
    <property type="term" value="P:monoatomic ion transmembrane transport"/>
    <property type="evidence" value="ECO:0000318"/>
    <property type="project" value="GO_Central"/>
</dbReference>
<dbReference type="GO" id="GO:0042391">
    <property type="term" value="P:regulation of membrane potential"/>
    <property type="evidence" value="ECO:0000266"/>
    <property type="project" value="RGD"/>
</dbReference>
<dbReference type="GO" id="GO:0003009">
    <property type="term" value="P:skeletal muscle contraction"/>
    <property type="evidence" value="ECO:0000314"/>
    <property type="project" value="RGD"/>
</dbReference>
<dbReference type="CDD" id="cd19029">
    <property type="entry name" value="LGIC_ECD_nAChR_G"/>
    <property type="match status" value="1"/>
</dbReference>
<dbReference type="CDD" id="cd19064">
    <property type="entry name" value="LGIC_TM_nAChR"/>
    <property type="match status" value="1"/>
</dbReference>
<dbReference type="FunFam" id="1.20.58.390:FF:000010">
    <property type="entry name" value="Nicotinic acetylcholine receptor subunit epsilon"/>
    <property type="match status" value="1"/>
</dbReference>
<dbReference type="FunFam" id="1.20.58.390:FF:000036">
    <property type="entry name" value="Nicotinic acetylcholine receptor subunit gamma"/>
    <property type="match status" value="1"/>
</dbReference>
<dbReference type="FunFam" id="2.70.170.10:FF:000012">
    <property type="entry name" value="Nicotinic acetylcholine receptor subunit gamma"/>
    <property type="match status" value="1"/>
</dbReference>
<dbReference type="Gene3D" id="2.70.170.10">
    <property type="entry name" value="Neurotransmitter-gated ion-channel ligand-binding domain"/>
    <property type="match status" value="1"/>
</dbReference>
<dbReference type="Gene3D" id="1.20.58.390">
    <property type="entry name" value="Neurotransmitter-gated ion-channel transmembrane domain"/>
    <property type="match status" value="2"/>
</dbReference>
<dbReference type="InterPro" id="IPR006202">
    <property type="entry name" value="Neur_chan_lig-bd"/>
</dbReference>
<dbReference type="InterPro" id="IPR036734">
    <property type="entry name" value="Neur_chan_lig-bd_sf"/>
</dbReference>
<dbReference type="InterPro" id="IPR006201">
    <property type="entry name" value="Neur_channel"/>
</dbReference>
<dbReference type="InterPro" id="IPR036719">
    <property type="entry name" value="Neuro-gated_channel_TM_sf"/>
</dbReference>
<dbReference type="InterPro" id="IPR038050">
    <property type="entry name" value="Neuro_actylchol_rec"/>
</dbReference>
<dbReference type="InterPro" id="IPR006029">
    <property type="entry name" value="Neurotrans-gated_channel_TM"/>
</dbReference>
<dbReference type="InterPro" id="IPR018000">
    <property type="entry name" value="Neurotransmitter_ion_chnl_CS"/>
</dbReference>
<dbReference type="InterPro" id="IPR002394">
    <property type="entry name" value="Nicotinic_acetylcholine_rcpt"/>
</dbReference>
<dbReference type="PANTHER" id="PTHR18945">
    <property type="entry name" value="NEUROTRANSMITTER GATED ION CHANNEL"/>
    <property type="match status" value="1"/>
</dbReference>
<dbReference type="Pfam" id="PF02931">
    <property type="entry name" value="Neur_chan_LBD"/>
    <property type="match status" value="1"/>
</dbReference>
<dbReference type="Pfam" id="PF02932">
    <property type="entry name" value="Neur_chan_memb"/>
    <property type="match status" value="1"/>
</dbReference>
<dbReference type="PRINTS" id="PR00254">
    <property type="entry name" value="NICOTINICR"/>
</dbReference>
<dbReference type="PRINTS" id="PR00252">
    <property type="entry name" value="NRIONCHANNEL"/>
</dbReference>
<dbReference type="SUPFAM" id="SSF90112">
    <property type="entry name" value="Neurotransmitter-gated ion-channel transmembrane pore"/>
    <property type="match status" value="1"/>
</dbReference>
<dbReference type="SUPFAM" id="SSF63712">
    <property type="entry name" value="Nicotinic receptor ligand binding domain-like"/>
    <property type="match status" value="1"/>
</dbReference>
<dbReference type="PROSITE" id="PS00236">
    <property type="entry name" value="NEUROTR_ION_CHANNEL"/>
    <property type="match status" value="1"/>
</dbReference>
<organism>
    <name type="scientific">Rattus norvegicus</name>
    <name type="common">Rat</name>
    <dbReference type="NCBI Taxonomy" id="10116"/>
    <lineage>
        <taxon>Eukaryota</taxon>
        <taxon>Metazoa</taxon>
        <taxon>Chordata</taxon>
        <taxon>Craniata</taxon>
        <taxon>Vertebrata</taxon>
        <taxon>Euteleostomi</taxon>
        <taxon>Mammalia</taxon>
        <taxon>Eutheria</taxon>
        <taxon>Euarchontoglires</taxon>
        <taxon>Glires</taxon>
        <taxon>Rodentia</taxon>
        <taxon>Myomorpha</taxon>
        <taxon>Muroidea</taxon>
        <taxon>Muridae</taxon>
        <taxon>Murinae</taxon>
        <taxon>Rattus</taxon>
    </lineage>
</organism>
<sequence length="519" mass="58621">MHGGQGPQLLLLLLATCLGAQSRNQEERLLADLMRNYDPHLRPAERDSDVVNVSLKLTLTNLISLNEREEALTTNVWIEMQWCDYRLRWDPKDYEGLWILRVPSTMVWQPDIVLGNNVDGVFEVALYCNVLVSPDGCIYWLPPAIFRSSCSISVTYFPFDWQNCSLVFQSQTYSTSEINLQLSQEDGQAIEWIFIDPEAFTENGEWAIRHRPAKMLLDPVTPAEEAGHQKVVFYLLIQRKPLFYVINIIVPCVLISSVAILIYFLPAKAGGQKCTVATNVLLAQTVFLFLVAKKVPETSQAVPLISKYLTFLMVVTILIVVNSVVVLNVSLRSPHTHSMARGVRKVFLRLLPQLLRMHVHPRAPAAVQDARLRLQNGSSSGWPIMTREEGDLCLPRSELLFRQRQRNGLVQAVLEKLENGPEMRQSQEFCGSLKQASPAIQACVDACNLMARARHQQSHFDSGNEEWLLVGRVLDRVCFLAMLSLFICGTAGIFLMAHYNQVPDLPFPGDPRPYLPLPD</sequence>
<keyword id="KW-1003">Cell membrane</keyword>
<keyword id="KW-1015">Disulfide bond</keyword>
<keyword id="KW-0325">Glycoprotein</keyword>
<keyword id="KW-0407">Ion channel</keyword>
<keyword id="KW-0406">Ion transport</keyword>
<keyword id="KW-1071">Ligand-gated ion channel</keyword>
<keyword id="KW-0472">Membrane</keyword>
<keyword id="KW-0628">Postsynaptic cell membrane</keyword>
<keyword id="KW-0675">Receptor</keyword>
<keyword id="KW-1185">Reference proteome</keyword>
<keyword id="KW-0732">Signal</keyword>
<keyword id="KW-0770">Synapse</keyword>
<keyword id="KW-0812">Transmembrane</keyword>
<keyword id="KW-1133">Transmembrane helix</keyword>
<keyword id="KW-0813">Transport</keyword>
<accession>P18916</accession>
<proteinExistence type="evidence at transcript level"/>
<name>ACHG_RAT</name>
<reference key="1">
    <citation type="journal article" date="1990" name="Eur. J. Biochem.">
        <title>Primary structure and functional expression of the alpha-, beta-, gamma-, delta- and epsilon-subunits of the acetylcholine receptor from rat muscle.</title>
        <authorList>
            <person name="Witzemann V."/>
            <person name="Stein E."/>
            <person name="Barg B."/>
            <person name="Konno T."/>
            <person name="Koenen M."/>
            <person name="Kues W."/>
            <person name="Criado M."/>
            <person name="Hofmann M."/>
            <person name="Sakmann B."/>
        </authorList>
    </citation>
    <scope>NUCLEOTIDE SEQUENCE [MRNA]</scope>
    <source>
        <tissue>Muscle</tissue>
    </source>
</reference>
<reference key="2">
    <citation type="journal article" date="1987" name="FEBS Lett.">
        <title>Differential regulation of muscle acetylcholine receptor gamma- and epsilon-subunit mRNAs.</title>
        <authorList>
            <person name="Witzemann V."/>
            <person name="Barg B."/>
            <person name="Nishikawa Y."/>
            <person name="Sakmann B."/>
            <person name="Numa S."/>
        </authorList>
    </citation>
    <scope>NUCLEOTIDE SEQUENCE [GENOMIC DNA] OF 203-306</scope>
</reference>
<comment type="function">
    <text>After binding acetylcholine, the AChR responds by an extensive change in conformation that affects all subunits and leads to opening of an ion-conducting channel across the plasma membrane.</text>
</comment>
<comment type="catalytic activity">
    <reaction evidence="2">
        <text>K(+)(in) = K(+)(out)</text>
        <dbReference type="Rhea" id="RHEA:29463"/>
        <dbReference type="ChEBI" id="CHEBI:29103"/>
    </reaction>
</comment>
<comment type="catalytic activity">
    <reaction evidence="2">
        <text>Na(+)(in) = Na(+)(out)</text>
        <dbReference type="Rhea" id="RHEA:34963"/>
        <dbReference type="ChEBI" id="CHEBI:29101"/>
    </reaction>
</comment>
<comment type="subunit">
    <text>Pentamer of two alpha chains, and one each of the beta, delta, and gamma (in immature muscle) or epsilon (in mature muscle) chains.</text>
</comment>
<comment type="subcellular location">
    <subcellularLocation>
        <location>Postsynaptic cell membrane</location>
        <topology>Multi-pass membrane protein</topology>
    </subcellularLocation>
    <subcellularLocation>
        <location>Cell membrane</location>
        <topology>Multi-pass membrane protein</topology>
    </subcellularLocation>
</comment>
<comment type="similarity">
    <text evidence="4">Belongs to the ligand-gated ion channel (TC 1.A.9) family. Acetylcholine receptor (TC 1.A.9.1) subfamily. Gamma/CHRNG sub-subfamily.</text>
</comment>
<evidence type="ECO:0000250" key="1"/>
<evidence type="ECO:0000250" key="2">
    <source>
        <dbReference type="UniProtKB" id="P13536"/>
    </source>
</evidence>
<evidence type="ECO:0000255" key="3"/>
<evidence type="ECO:0000305" key="4"/>
<protein>
    <recommendedName>
        <fullName>Acetylcholine receptor subunit gamma</fullName>
    </recommendedName>
</protein>
<feature type="signal peptide" evidence="3">
    <location>
        <begin position="1"/>
        <end position="22"/>
    </location>
</feature>
<feature type="chain" id="PRO_0000000336" description="Acetylcholine receptor subunit gamma">
    <location>
        <begin position="23"/>
        <end position="519"/>
    </location>
</feature>
<feature type="topological domain" description="Extracellular" evidence="3">
    <location>
        <begin position="23"/>
        <end position="240"/>
    </location>
</feature>
<feature type="transmembrane region" description="Helical" evidence="3">
    <location>
        <begin position="241"/>
        <end position="265"/>
    </location>
</feature>
<feature type="transmembrane region" description="Helical" evidence="3">
    <location>
        <begin position="274"/>
        <end position="292"/>
    </location>
</feature>
<feature type="transmembrane region" description="Helical" evidence="3">
    <location>
        <begin position="308"/>
        <end position="329"/>
    </location>
</feature>
<feature type="topological domain" description="Cytoplasmic" evidence="3">
    <location>
        <begin position="330"/>
        <end position="476"/>
    </location>
</feature>
<feature type="transmembrane region" description="Helical" evidence="3">
    <location>
        <begin position="477"/>
        <end position="497"/>
    </location>
</feature>
<feature type="glycosylation site" description="N-linked (GlcNAc...) asparagine" evidence="3">
    <location>
        <position position="52"/>
    </location>
</feature>
<feature type="glycosylation site" description="N-linked (GlcNAc...) asparagine" evidence="3">
    <location>
        <position position="163"/>
    </location>
</feature>
<feature type="disulfide bond" evidence="1">
    <location>
        <begin position="150"/>
        <end position="164"/>
    </location>
</feature>